<proteinExistence type="inferred from homology"/>
<keyword id="KW-1185">Reference proteome</keyword>
<feature type="chain" id="PRO_1000068583" description="UPF0297 protein Lreu_0534">
    <location>
        <begin position="1"/>
        <end position="88"/>
    </location>
</feature>
<dbReference type="EMBL" id="CP000705">
    <property type="protein sequence ID" value="ABQ82802.1"/>
    <property type="molecule type" value="Genomic_DNA"/>
</dbReference>
<dbReference type="RefSeq" id="WP_003666685.1">
    <property type="nucleotide sequence ID" value="NZ_AZDD01000007.1"/>
</dbReference>
<dbReference type="SMR" id="A5VIX8"/>
<dbReference type="STRING" id="557436.Lreu_0534"/>
<dbReference type="KEGG" id="lre:Lreu_0534"/>
<dbReference type="PATRIC" id="fig|557436.17.peg.1814"/>
<dbReference type="eggNOG" id="COG4472">
    <property type="taxonomic scope" value="Bacteria"/>
</dbReference>
<dbReference type="HOGENOM" id="CLU_162466_0_0_9"/>
<dbReference type="Proteomes" id="UP000001991">
    <property type="component" value="Chromosome"/>
</dbReference>
<dbReference type="HAMAP" id="MF_01507">
    <property type="entry name" value="UPF0297"/>
    <property type="match status" value="1"/>
</dbReference>
<dbReference type="InterPro" id="IPR009309">
    <property type="entry name" value="IreB"/>
</dbReference>
<dbReference type="NCBIfam" id="NF003997">
    <property type="entry name" value="PRK05473.1"/>
    <property type="match status" value="1"/>
</dbReference>
<dbReference type="PANTHER" id="PTHR40067">
    <property type="entry name" value="UPF0297 PROTEIN YRZL"/>
    <property type="match status" value="1"/>
</dbReference>
<dbReference type="PANTHER" id="PTHR40067:SF1">
    <property type="entry name" value="UPF0297 PROTEIN YRZL"/>
    <property type="match status" value="1"/>
</dbReference>
<dbReference type="Pfam" id="PF06135">
    <property type="entry name" value="IreB"/>
    <property type="match status" value="1"/>
</dbReference>
<dbReference type="PIRSF" id="PIRSF037258">
    <property type="entry name" value="DUF965_bac"/>
    <property type="match status" value="1"/>
</dbReference>
<organism>
    <name type="scientific">Limosilactobacillus reuteri (strain DSM 20016)</name>
    <name type="common">Lactobacillus reuteri</name>
    <dbReference type="NCBI Taxonomy" id="557436"/>
    <lineage>
        <taxon>Bacteria</taxon>
        <taxon>Bacillati</taxon>
        <taxon>Bacillota</taxon>
        <taxon>Bacilli</taxon>
        <taxon>Lactobacillales</taxon>
        <taxon>Lactobacillaceae</taxon>
        <taxon>Limosilactobacillus</taxon>
    </lineage>
</organism>
<name>Y534_LIMRD</name>
<reference key="1">
    <citation type="journal article" date="2011" name="PLoS Genet.">
        <title>The evolution of host specialization in the vertebrate gut symbiont Lactobacillus reuteri.</title>
        <authorList>
            <person name="Frese S.A."/>
            <person name="Benson A.K."/>
            <person name="Tannock G.W."/>
            <person name="Loach D.M."/>
            <person name="Kim J."/>
            <person name="Zhang M."/>
            <person name="Oh P.L."/>
            <person name="Heng N.C."/>
            <person name="Patil P.B."/>
            <person name="Juge N."/>
            <person name="Mackenzie D.A."/>
            <person name="Pearson B.M."/>
            <person name="Lapidus A."/>
            <person name="Dalin E."/>
            <person name="Tice H."/>
            <person name="Goltsman E."/>
            <person name="Land M."/>
            <person name="Hauser L."/>
            <person name="Ivanova N."/>
            <person name="Kyrpides N.C."/>
            <person name="Walter J."/>
        </authorList>
    </citation>
    <scope>NUCLEOTIDE SEQUENCE [LARGE SCALE GENOMIC DNA]</scope>
    <source>
        <strain>DSM 20016</strain>
    </source>
</reference>
<accession>A5VIX8</accession>
<comment type="similarity">
    <text evidence="1">Belongs to the UPF0297 family.</text>
</comment>
<gene>
    <name type="ordered locus">Lreu_0534</name>
</gene>
<sequence length="88" mass="10354">MATNDKTMFFDFGQERQEDIKQTLKTVYESLEEKGYNPINQIVGYLLSGDPAYIPRLNDARNLIRQHERDEIIEELVRSYLKNNGETK</sequence>
<evidence type="ECO:0000255" key="1">
    <source>
        <dbReference type="HAMAP-Rule" id="MF_01507"/>
    </source>
</evidence>
<protein>
    <recommendedName>
        <fullName evidence="1">UPF0297 protein Lreu_0534</fullName>
    </recommendedName>
</protein>